<evidence type="ECO:0000255" key="1"/>
<evidence type="ECO:0000255" key="2">
    <source>
        <dbReference type="PROSITE-ProRule" id="PRU00581"/>
    </source>
</evidence>
<evidence type="ECO:0000256" key="3">
    <source>
        <dbReference type="SAM" id="MobiDB-lite"/>
    </source>
</evidence>
<evidence type="ECO:0000305" key="4"/>
<protein>
    <recommendedName>
        <fullName>Synaptogyrin-4</fullName>
    </recommendedName>
</protein>
<organism>
    <name type="scientific">Bos taurus</name>
    <name type="common">Bovine</name>
    <dbReference type="NCBI Taxonomy" id="9913"/>
    <lineage>
        <taxon>Eukaryota</taxon>
        <taxon>Metazoa</taxon>
        <taxon>Chordata</taxon>
        <taxon>Craniata</taxon>
        <taxon>Vertebrata</taxon>
        <taxon>Euteleostomi</taxon>
        <taxon>Mammalia</taxon>
        <taxon>Eutheria</taxon>
        <taxon>Laurasiatheria</taxon>
        <taxon>Artiodactyla</taxon>
        <taxon>Ruminantia</taxon>
        <taxon>Pecora</taxon>
        <taxon>Bovidae</taxon>
        <taxon>Bovinae</taxon>
        <taxon>Bos</taxon>
    </lineage>
</organism>
<keyword id="KW-0472">Membrane</keyword>
<keyword id="KW-1185">Reference proteome</keyword>
<keyword id="KW-0812">Transmembrane</keyword>
<keyword id="KW-1133">Transmembrane helix</keyword>
<dbReference type="EMBL" id="BC110272">
    <property type="protein sequence ID" value="AAI10273.1"/>
    <property type="molecule type" value="mRNA"/>
</dbReference>
<dbReference type="RefSeq" id="NP_001039901.1">
    <property type="nucleotide sequence ID" value="NM_001046436.2"/>
</dbReference>
<dbReference type="SMR" id="Q2YDD6"/>
<dbReference type="FunCoup" id="Q2YDD6">
    <property type="interactions" value="67"/>
</dbReference>
<dbReference type="STRING" id="9913.ENSBTAP00000011267"/>
<dbReference type="PaxDb" id="9913-ENSBTAP00000011267"/>
<dbReference type="GeneID" id="538683"/>
<dbReference type="KEGG" id="bta:538683"/>
<dbReference type="CTD" id="23546"/>
<dbReference type="eggNOG" id="KOG4016">
    <property type="taxonomic scope" value="Eukaryota"/>
</dbReference>
<dbReference type="InParanoid" id="Q2YDD6"/>
<dbReference type="OrthoDB" id="10041611at2759"/>
<dbReference type="Proteomes" id="UP000009136">
    <property type="component" value="Unplaced"/>
</dbReference>
<dbReference type="GO" id="GO:0031594">
    <property type="term" value="C:neuromuscular junction"/>
    <property type="evidence" value="ECO:0000318"/>
    <property type="project" value="GO_Central"/>
</dbReference>
<dbReference type="GO" id="GO:0030672">
    <property type="term" value="C:synaptic vesicle membrane"/>
    <property type="evidence" value="ECO:0000318"/>
    <property type="project" value="GO_Central"/>
</dbReference>
<dbReference type="InterPro" id="IPR008253">
    <property type="entry name" value="Marvel"/>
</dbReference>
<dbReference type="InterPro" id="IPR016579">
    <property type="entry name" value="Synaptogyrin"/>
</dbReference>
<dbReference type="PANTHER" id="PTHR10838">
    <property type="entry name" value="SYNAPTOGYRIN"/>
    <property type="match status" value="1"/>
</dbReference>
<dbReference type="PANTHER" id="PTHR10838:SF22">
    <property type="entry name" value="SYNAPTOGYRIN-4"/>
    <property type="match status" value="1"/>
</dbReference>
<dbReference type="Pfam" id="PF01284">
    <property type="entry name" value="MARVEL"/>
    <property type="match status" value="1"/>
</dbReference>
<dbReference type="PIRSF" id="PIRSF011282">
    <property type="entry name" value="Synaptogyrin"/>
    <property type="match status" value="1"/>
</dbReference>
<dbReference type="PROSITE" id="PS51225">
    <property type="entry name" value="MARVEL"/>
    <property type="match status" value="1"/>
</dbReference>
<feature type="chain" id="PRO_0000343949" description="Synaptogyrin-4">
    <location>
        <begin position="1"/>
        <end position="234"/>
    </location>
</feature>
<feature type="transmembrane region" description="Helical" evidence="1">
    <location>
        <begin position="25"/>
        <end position="45"/>
    </location>
</feature>
<feature type="transmembrane region" description="Helical" evidence="1">
    <location>
        <begin position="66"/>
        <end position="86"/>
    </location>
</feature>
<feature type="transmembrane region" description="Helical" evidence="1">
    <location>
        <begin position="104"/>
        <end position="124"/>
    </location>
</feature>
<feature type="transmembrane region" description="Helical" evidence="1">
    <location>
        <begin position="145"/>
        <end position="165"/>
    </location>
</feature>
<feature type="domain" description="MARVEL" evidence="2">
    <location>
        <begin position="18"/>
        <end position="169"/>
    </location>
</feature>
<feature type="region of interest" description="Disordered" evidence="3">
    <location>
        <begin position="191"/>
        <end position="226"/>
    </location>
</feature>
<feature type="compositionally biased region" description="Low complexity" evidence="3">
    <location>
        <begin position="209"/>
        <end position="221"/>
    </location>
</feature>
<proteinExistence type="evidence at transcript level"/>
<accession>Q2YDD6</accession>
<name>SNG4_BOVIN</name>
<gene>
    <name type="primary">SYNGR4</name>
</gene>
<comment type="subcellular location">
    <subcellularLocation>
        <location>Membrane</location>
        <topology>Multi-pass membrane protein</topology>
    </subcellularLocation>
</comment>
<comment type="similarity">
    <text evidence="4">Belongs to the synaptogyrin family.</text>
</comment>
<reference key="1">
    <citation type="submission" date="2005-11" db="EMBL/GenBank/DDBJ databases">
        <authorList>
            <consortium name="NIH - Mammalian Gene Collection (MGC) project"/>
        </authorList>
    </citation>
    <scope>NUCLEOTIDE SEQUENCE [LARGE SCALE MRNA]</scope>
    <source>
        <strain>Crossbred X Angus</strain>
        <tissue>Liver</tissue>
    </source>
</reference>
<sequence>MHIPESLQDLADSEAVQFLKRPKAITRIFAGVFSLIVFSSLLTDGYQNKTDNSELHCVLNSNSTACSIAVGAGLLAFLSSLAFLALDAHEVRLASTRFKTAFQLLDLILAVIWAGVWAVGFCFLANQWHRSPPRYFLLGSNSAKAAITFSFFSILVWIFQAYLAFQELRNDAPVPYKRSLDEGGVVLTSLSPPSAASPVNTPTTGPHGPSYASSSLSPYLSTPKAPRLAMMPDN</sequence>